<keyword id="KW-0227">DNA damage</keyword>
<keyword id="KW-0234">DNA repair</keyword>
<keyword id="KW-0238">DNA-binding</keyword>
<keyword id="KW-0326">Glycosidase</keyword>
<keyword id="KW-0378">Hydrolase</keyword>
<keyword id="KW-0456">Lyase</keyword>
<keyword id="KW-0479">Metal-binding</keyword>
<keyword id="KW-0511">Multifunctional enzyme</keyword>
<keyword id="KW-1185">Reference proteome</keyword>
<keyword id="KW-0862">Zinc</keyword>
<keyword id="KW-0863">Zinc-finger</keyword>
<evidence type="ECO:0000250" key="1"/>
<evidence type="ECO:0000305" key="2"/>
<reference key="1">
    <citation type="journal article" date="2003" name="Proc. Natl. Acad. Sci. U.S.A.">
        <title>The complete genome sequence of Mycobacterium bovis.</title>
        <authorList>
            <person name="Garnier T."/>
            <person name="Eiglmeier K."/>
            <person name="Camus J.-C."/>
            <person name="Medina N."/>
            <person name="Mansoor H."/>
            <person name="Pryor M."/>
            <person name="Duthoy S."/>
            <person name="Grondin S."/>
            <person name="Lacroix C."/>
            <person name="Monsempe C."/>
            <person name="Simon S."/>
            <person name="Harris B."/>
            <person name="Atkin R."/>
            <person name="Doggett J."/>
            <person name="Mayes R."/>
            <person name="Keating L."/>
            <person name="Wheeler P.R."/>
            <person name="Parkhill J."/>
            <person name="Barrell B.G."/>
            <person name="Cole S.T."/>
            <person name="Gordon S.V."/>
            <person name="Hewinson R.G."/>
        </authorList>
    </citation>
    <scope>NUCLEOTIDE SEQUENCE [LARGE SCALE GENOMIC DNA]</scope>
    <source>
        <strain>ATCC BAA-935 / AF2122/97</strain>
    </source>
</reference>
<reference key="2">
    <citation type="journal article" date="2017" name="Genome Announc.">
        <title>Updated reference genome sequence and annotation of Mycobacterium bovis AF2122/97.</title>
        <authorList>
            <person name="Malone K.M."/>
            <person name="Farrell D."/>
            <person name="Stuber T.P."/>
            <person name="Schubert O.T."/>
            <person name="Aebersold R."/>
            <person name="Robbe-Austerman S."/>
            <person name="Gordon S.V."/>
        </authorList>
    </citation>
    <scope>NUCLEOTIDE SEQUENCE [LARGE SCALE GENOMIC DNA]</scope>
    <scope>GENOME REANNOTATION</scope>
    <source>
        <strain>ATCC BAA-935 / AF2122/97</strain>
    </source>
</reference>
<name>FPG_MYCBO</name>
<organism>
    <name type="scientific">Mycobacterium bovis (strain ATCC BAA-935 / AF2122/97)</name>
    <dbReference type="NCBI Taxonomy" id="233413"/>
    <lineage>
        <taxon>Bacteria</taxon>
        <taxon>Bacillati</taxon>
        <taxon>Actinomycetota</taxon>
        <taxon>Actinomycetes</taxon>
        <taxon>Mycobacteriales</taxon>
        <taxon>Mycobacteriaceae</taxon>
        <taxon>Mycobacterium</taxon>
        <taxon>Mycobacterium tuberculosis complex</taxon>
    </lineage>
</organism>
<feature type="initiator methionine" description="Removed" evidence="1">
    <location>
        <position position="1"/>
    </location>
</feature>
<feature type="chain" id="PRO_0000170841" description="Formamidopyrimidine-DNA glycosylase">
    <location>
        <begin position="2"/>
        <end position="289"/>
    </location>
</feature>
<feature type="zinc finger region" description="FPG-type">
    <location>
        <begin position="251"/>
        <end position="285"/>
    </location>
</feature>
<feature type="active site" description="Schiff-base intermediate with DNA" evidence="1">
    <location>
        <position position="2"/>
    </location>
</feature>
<feature type="active site" description="Proton donor" evidence="1">
    <location>
        <position position="3"/>
    </location>
</feature>
<feature type="active site" description="Proton donor; for beta-elimination activity" evidence="1">
    <location>
        <position position="61"/>
    </location>
</feature>
<feature type="active site" description="Proton donor; for delta-elimination activity" evidence="1">
    <location>
        <position position="275"/>
    </location>
</feature>
<feature type="binding site" evidence="1">
    <location>
        <position position="100"/>
    </location>
    <ligand>
        <name>DNA</name>
        <dbReference type="ChEBI" id="CHEBI:16991"/>
    </ligand>
</feature>
<feature type="binding site" evidence="1">
    <location>
        <position position="119"/>
    </location>
    <ligand>
        <name>DNA</name>
        <dbReference type="ChEBI" id="CHEBI:16991"/>
    </ligand>
</feature>
<feature type="binding site" evidence="1">
    <location>
        <position position="165"/>
    </location>
    <ligand>
        <name>DNA</name>
        <dbReference type="ChEBI" id="CHEBI:16991"/>
    </ligand>
</feature>
<protein>
    <recommendedName>
        <fullName>Formamidopyrimidine-DNA glycosylase</fullName>
        <shortName>Fapy-DNA glycosylase</shortName>
        <ecNumber>3.2.2.23</ecNumber>
    </recommendedName>
    <alternativeName>
        <fullName>DNA-(apurinic or apyrimidinic site) lyase MutM</fullName>
        <shortName>AP lyase MutM</shortName>
        <ecNumber>4.2.99.18</ecNumber>
    </alternativeName>
</protein>
<proteinExistence type="inferred from homology"/>
<comment type="function">
    <text evidence="1">Involved in base excision repair of DNA damaged by oxidation or by mutagenic agents. Acts as a DNA glycosylase that recognizes and removes damaged bases. Has a preference for oxidized purines, such as 7,8-dihydro-8-oxoguanine (8-oxoG). Has AP (apurinic/apyrimidinic) lyase activity and introduces nicks in the DNA strand. Cleaves the DNA backbone by beta-delta elimination to generate a single-strand break at the site of the removed base with both 3'- and 5'-phosphates (By similarity).</text>
</comment>
<comment type="catalytic activity">
    <reaction>
        <text>Hydrolysis of DNA containing ring-opened 7-methylguanine residues, releasing 2,6-diamino-4-hydroxy-5-(N-methyl)formamidopyrimidine.</text>
        <dbReference type="EC" id="3.2.2.23"/>
    </reaction>
</comment>
<comment type="catalytic activity">
    <reaction>
        <text>2'-deoxyribonucleotide-(2'-deoxyribose 5'-phosphate)-2'-deoxyribonucleotide-DNA = a 3'-end 2'-deoxyribonucleotide-(2,3-dehydro-2,3-deoxyribose 5'-phosphate)-DNA + a 5'-end 5'-phospho-2'-deoxyribonucleoside-DNA + H(+)</text>
        <dbReference type="Rhea" id="RHEA:66592"/>
        <dbReference type="Rhea" id="RHEA-COMP:13180"/>
        <dbReference type="Rhea" id="RHEA-COMP:16897"/>
        <dbReference type="Rhea" id="RHEA-COMP:17067"/>
        <dbReference type="ChEBI" id="CHEBI:15378"/>
        <dbReference type="ChEBI" id="CHEBI:136412"/>
        <dbReference type="ChEBI" id="CHEBI:157695"/>
        <dbReference type="ChEBI" id="CHEBI:167181"/>
        <dbReference type="EC" id="4.2.99.18"/>
    </reaction>
</comment>
<comment type="cofactor">
    <cofactor evidence="1">
        <name>Zn(2+)</name>
        <dbReference type="ChEBI" id="CHEBI:29105"/>
    </cofactor>
    <text evidence="1">Binds 1 zinc ion per subunit.</text>
</comment>
<comment type="subunit">
    <text evidence="1">Monomer.</text>
</comment>
<comment type="similarity">
    <text evidence="2">Belongs to the FPG family.</text>
</comment>
<gene>
    <name type="primary">mutM</name>
    <name type="synonym">fpg</name>
    <name type="ordered locus">BQ2027_MB2949C</name>
</gene>
<dbReference type="EC" id="3.2.2.23"/>
<dbReference type="EC" id="4.2.99.18"/>
<dbReference type="EMBL" id="LT708304">
    <property type="protein sequence ID" value="SIU01570.1"/>
    <property type="molecule type" value="Genomic_DNA"/>
</dbReference>
<dbReference type="RefSeq" id="NP_856594.1">
    <property type="nucleotide sequence ID" value="NC_002945.3"/>
</dbReference>
<dbReference type="RefSeq" id="WP_003414814.1">
    <property type="nucleotide sequence ID" value="NC_002945.4"/>
</dbReference>
<dbReference type="SMR" id="P64151"/>
<dbReference type="GeneID" id="45426912"/>
<dbReference type="KEGG" id="mbo:BQ2027_MB2949C"/>
<dbReference type="PATRIC" id="fig|233413.5.peg.3236"/>
<dbReference type="Proteomes" id="UP000001419">
    <property type="component" value="Chromosome"/>
</dbReference>
<dbReference type="GO" id="GO:0034039">
    <property type="term" value="F:8-oxo-7,8-dihydroguanine DNA N-glycosylase activity"/>
    <property type="evidence" value="ECO:0007669"/>
    <property type="project" value="TreeGrafter"/>
</dbReference>
<dbReference type="GO" id="GO:0140078">
    <property type="term" value="F:class I DNA-(apurinic or apyrimidinic site) endonuclease activity"/>
    <property type="evidence" value="ECO:0007669"/>
    <property type="project" value="UniProtKB-EC"/>
</dbReference>
<dbReference type="GO" id="GO:0003684">
    <property type="term" value="F:damaged DNA binding"/>
    <property type="evidence" value="ECO:0007669"/>
    <property type="project" value="InterPro"/>
</dbReference>
<dbReference type="GO" id="GO:0008270">
    <property type="term" value="F:zinc ion binding"/>
    <property type="evidence" value="ECO:0007669"/>
    <property type="project" value="UniProtKB-UniRule"/>
</dbReference>
<dbReference type="GO" id="GO:0006284">
    <property type="term" value="P:base-excision repair"/>
    <property type="evidence" value="ECO:0007669"/>
    <property type="project" value="InterPro"/>
</dbReference>
<dbReference type="CDD" id="cd08966">
    <property type="entry name" value="EcFpg-like_N"/>
    <property type="match status" value="1"/>
</dbReference>
<dbReference type="FunFam" id="1.10.8.50:FF:000003">
    <property type="entry name" value="Formamidopyrimidine-DNA glycosylase"/>
    <property type="match status" value="1"/>
</dbReference>
<dbReference type="FunFam" id="3.20.190.10:FF:000006">
    <property type="entry name" value="Formamidopyrimidine-DNA glycosylase"/>
    <property type="match status" value="1"/>
</dbReference>
<dbReference type="Gene3D" id="1.10.8.50">
    <property type="match status" value="1"/>
</dbReference>
<dbReference type="Gene3D" id="3.20.190.10">
    <property type="entry name" value="MutM-like, N-terminal"/>
    <property type="match status" value="1"/>
</dbReference>
<dbReference type="HAMAP" id="MF_00103">
    <property type="entry name" value="Fapy_DNA_glycosyl"/>
    <property type="match status" value="1"/>
</dbReference>
<dbReference type="InterPro" id="IPR015886">
    <property type="entry name" value="DNA_glyclase/AP_lyase_DNA-bd"/>
</dbReference>
<dbReference type="InterPro" id="IPR015887">
    <property type="entry name" value="DNA_glyclase_Znf_dom_DNA_BS"/>
</dbReference>
<dbReference type="InterPro" id="IPR020629">
    <property type="entry name" value="Formamido-pyr_DNA_Glyclase"/>
</dbReference>
<dbReference type="InterPro" id="IPR012319">
    <property type="entry name" value="FPG_cat"/>
</dbReference>
<dbReference type="InterPro" id="IPR035937">
    <property type="entry name" value="MutM-like_N-ter"/>
</dbReference>
<dbReference type="InterPro" id="IPR010979">
    <property type="entry name" value="Ribosomal_uS13-like_H2TH"/>
</dbReference>
<dbReference type="InterPro" id="IPR000214">
    <property type="entry name" value="Znf_DNA_glyclase/AP_lyase"/>
</dbReference>
<dbReference type="InterPro" id="IPR010663">
    <property type="entry name" value="Znf_FPG/IleRS"/>
</dbReference>
<dbReference type="NCBIfam" id="TIGR00577">
    <property type="entry name" value="fpg"/>
    <property type="match status" value="1"/>
</dbReference>
<dbReference type="NCBIfam" id="NF002211">
    <property type="entry name" value="PRK01103.1"/>
    <property type="match status" value="1"/>
</dbReference>
<dbReference type="PANTHER" id="PTHR22993">
    <property type="entry name" value="FORMAMIDOPYRIMIDINE-DNA GLYCOSYLASE"/>
    <property type="match status" value="1"/>
</dbReference>
<dbReference type="PANTHER" id="PTHR22993:SF9">
    <property type="entry name" value="FORMAMIDOPYRIMIDINE-DNA GLYCOSYLASE"/>
    <property type="match status" value="1"/>
</dbReference>
<dbReference type="Pfam" id="PF01149">
    <property type="entry name" value="Fapy_DNA_glyco"/>
    <property type="match status" value="1"/>
</dbReference>
<dbReference type="Pfam" id="PF06831">
    <property type="entry name" value="H2TH"/>
    <property type="match status" value="1"/>
</dbReference>
<dbReference type="Pfam" id="PF06827">
    <property type="entry name" value="zf-FPG_IleRS"/>
    <property type="match status" value="1"/>
</dbReference>
<dbReference type="SMART" id="SM00898">
    <property type="entry name" value="Fapy_DNA_glyco"/>
    <property type="match status" value="1"/>
</dbReference>
<dbReference type="SMART" id="SM01232">
    <property type="entry name" value="H2TH"/>
    <property type="match status" value="1"/>
</dbReference>
<dbReference type="SUPFAM" id="SSF57716">
    <property type="entry name" value="Glucocorticoid receptor-like (DNA-binding domain)"/>
    <property type="match status" value="1"/>
</dbReference>
<dbReference type="SUPFAM" id="SSF81624">
    <property type="entry name" value="N-terminal domain of MutM-like DNA repair proteins"/>
    <property type="match status" value="1"/>
</dbReference>
<dbReference type="SUPFAM" id="SSF46946">
    <property type="entry name" value="S13-like H2TH domain"/>
    <property type="match status" value="1"/>
</dbReference>
<dbReference type="PROSITE" id="PS51068">
    <property type="entry name" value="FPG_CAT"/>
    <property type="match status" value="1"/>
</dbReference>
<dbReference type="PROSITE" id="PS01242">
    <property type="entry name" value="ZF_FPG_1"/>
    <property type="match status" value="1"/>
</dbReference>
<dbReference type="PROSITE" id="PS51066">
    <property type="entry name" value="ZF_FPG_2"/>
    <property type="match status" value="1"/>
</dbReference>
<sequence>MPELPEVEVVRRGLQAHVTGRTITEVRVHHPRAVRRHDAGPADLTARLRGARINGTDRRGKYLWLTLNTAGVHRPTDTALVVHLGMSGQMLLGAVPCAAHVRISALLDDGTVLSFADQRTFGGWLLADLVTVDGSVVPVPVAHLARDPLDPRFDCDAVVKVLRRKHSELKRQLLDQRVVSGIGNIYADEALWRAKVNGAHVAATLRCRRLGAVLHAAADVMREALAKGGTSFDSLYVNVNGESGYFERSLDAYGREGENCRRCGAVIRRERFMNRSSFYCPRCQPRPRK</sequence>
<accession>P64151</accession>
<accession>A0A1R3Y2L4</accession>
<accession>Q10959</accession>
<accession>X2BMT5</accession>